<name>MRPA_BACSU</name>
<dbReference type="EMBL" id="Z93937">
    <property type="protein sequence ID" value="CAB07942.1"/>
    <property type="status" value="ALT_INIT"/>
    <property type="molecule type" value="Genomic_DNA"/>
</dbReference>
<dbReference type="EMBL" id="AL009126">
    <property type="protein sequence ID" value="CAB15149.2"/>
    <property type="molecule type" value="Genomic_DNA"/>
</dbReference>
<dbReference type="PIR" id="A70010">
    <property type="entry name" value="A70010"/>
</dbReference>
<dbReference type="RefSeq" id="NP_391038.2">
    <property type="nucleotide sequence ID" value="NC_000964.3"/>
</dbReference>
<dbReference type="RefSeq" id="WP_003228821.1">
    <property type="nucleotide sequence ID" value="NZ_OZ025638.1"/>
</dbReference>
<dbReference type="SMR" id="Q9K2S2"/>
<dbReference type="FunCoup" id="Q9K2S2">
    <property type="interactions" value="223"/>
</dbReference>
<dbReference type="IntAct" id="Q9K2S2">
    <property type="interactions" value="1"/>
</dbReference>
<dbReference type="STRING" id="224308.BSU31600"/>
<dbReference type="TCDB" id="2.A.63.1.4">
    <property type="family name" value="the monovalent cation (k(+) or na(+)):proton antiporter-3 (cpa3) family"/>
</dbReference>
<dbReference type="PaxDb" id="224308-BSU31600"/>
<dbReference type="EnsemblBacteria" id="CAB15149">
    <property type="protein sequence ID" value="CAB15149"/>
    <property type="gene ID" value="BSU_31600"/>
</dbReference>
<dbReference type="GeneID" id="938828"/>
<dbReference type="KEGG" id="bsu:BSU31600"/>
<dbReference type="PATRIC" id="fig|224308.179.peg.3425"/>
<dbReference type="eggNOG" id="COG1009">
    <property type="taxonomic scope" value="Bacteria"/>
</dbReference>
<dbReference type="eggNOG" id="COG2111">
    <property type="taxonomic scope" value="Bacteria"/>
</dbReference>
<dbReference type="InParanoid" id="Q9K2S2"/>
<dbReference type="OrthoDB" id="9807568at2"/>
<dbReference type="PhylomeDB" id="Q9K2S2"/>
<dbReference type="BioCyc" id="BSUB:BSU31600-MONOMER"/>
<dbReference type="Proteomes" id="UP000001570">
    <property type="component" value="Chromosome"/>
</dbReference>
<dbReference type="GO" id="GO:0005886">
    <property type="term" value="C:plasma membrane"/>
    <property type="evidence" value="ECO:0007669"/>
    <property type="project" value="UniProtKB-SubCell"/>
</dbReference>
<dbReference type="GO" id="GO:0015385">
    <property type="term" value="F:sodium:proton antiporter activity"/>
    <property type="evidence" value="ECO:0000315"/>
    <property type="project" value="CACAO"/>
</dbReference>
<dbReference type="GO" id="GO:0030435">
    <property type="term" value="P:sporulation resulting in formation of a cellular spore"/>
    <property type="evidence" value="ECO:0007669"/>
    <property type="project" value="UniProtKB-KW"/>
</dbReference>
<dbReference type="InterPro" id="IPR050616">
    <property type="entry name" value="CPA3_Na-H_Antiporter_A"/>
</dbReference>
<dbReference type="InterPro" id="IPR005663">
    <property type="entry name" value="MrpA/MnhA1/PhaAB"/>
</dbReference>
<dbReference type="InterPro" id="IPR025383">
    <property type="entry name" value="MrpA_C/MbhD"/>
</dbReference>
<dbReference type="InterPro" id="IPR046806">
    <property type="entry name" value="MrpA_C/MbhE"/>
</dbReference>
<dbReference type="InterPro" id="IPR001750">
    <property type="entry name" value="ND/Mrp_TM"/>
</dbReference>
<dbReference type="InterPro" id="IPR001516">
    <property type="entry name" value="Proton_antipo_N"/>
</dbReference>
<dbReference type="NCBIfam" id="TIGR00940">
    <property type="entry name" value="2a6301s01"/>
    <property type="match status" value="1"/>
</dbReference>
<dbReference type="NCBIfam" id="NF009285">
    <property type="entry name" value="PRK12645.1"/>
    <property type="match status" value="1"/>
</dbReference>
<dbReference type="PANTHER" id="PTHR43373">
    <property type="entry name" value="NA(+)/H(+) ANTIPORTER SUBUNIT"/>
    <property type="match status" value="1"/>
</dbReference>
<dbReference type="PANTHER" id="PTHR43373:SF1">
    <property type="entry name" value="NA(+)_H(+) ANTIPORTER SUBUNIT A"/>
    <property type="match status" value="1"/>
</dbReference>
<dbReference type="Pfam" id="PF13244">
    <property type="entry name" value="MbhD"/>
    <property type="match status" value="1"/>
</dbReference>
<dbReference type="Pfam" id="PF20501">
    <property type="entry name" value="MbhE"/>
    <property type="match status" value="1"/>
</dbReference>
<dbReference type="Pfam" id="PF00361">
    <property type="entry name" value="Proton_antipo_M"/>
    <property type="match status" value="1"/>
</dbReference>
<dbReference type="Pfam" id="PF00662">
    <property type="entry name" value="Proton_antipo_N"/>
    <property type="match status" value="1"/>
</dbReference>
<dbReference type="PRINTS" id="PR01434">
    <property type="entry name" value="NADHDHGNASE5"/>
</dbReference>
<dbReference type="PRINTS" id="PR01435">
    <property type="entry name" value="NPOXDRDTASE5"/>
</dbReference>
<evidence type="ECO:0000255" key="1"/>
<evidence type="ECO:0000269" key="2">
    <source>
    </source>
</evidence>
<evidence type="ECO:0000269" key="3">
    <source>
    </source>
</evidence>
<evidence type="ECO:0000269" key="4">
    <source>
    </source>
</evidence>
<evidence type="ECO:0000269" key="5">
    <source>
    </source>
</evidence>
<evidence type="ECO:0000269" key="6">
    <source>
    </source>
</evidence>
<evidence type="ECO:0000305" key="7"/>
<reference key="1">
    <citation type="journal article" date="1997" name="Microbiology">
        <title>Analysis of the Bacillus subtilis genome: cloning and nucleotide sequence of a 62 kb region between 275 degrees (rrnB) and 284 degrees (pai).</title>
        <authorList>
            <person name="Oudega B."/>
            <person name="Koningstein G."/>
            <person name="Rodrigues L."/>
            <person name="de Sales Ramon M."/>
            <person name="Hilbert H."/>
            <person name="Duesterhoeft A."/>
            <person name="Pohl T.M."/>
            <person name="Weitzenegger T."/>
        </authorList>
    </citation>
    <scope>NUCLEOTIDE SEQUENCE [GENOMIC DNA]</scope>
    <source>
        <strain>168</strain>
    </source>
</reference>
<reference key="2">
    <citation type="journal article" date="1997" name="Nature">
        <title>The complete genome sequence of the Gram-positive bacterium Bacillus subtilis.</title>
        <authorList>
            <person name="Kunst F."/>
            <person name="Ogasawara N."/>
            <person name="Moszer I."/>
            <person name="Albertini A.M."/>
            <person name="Alloni G."/>
            <person name="Azevedo V."/>
            <person name="Bertero M.G."/>
            <person name="Bessieres P."/>
            <person name="Bolotin A."/>
            <person name="Borchert S."/>
            <person name="Borriss R."/>
            <person name="Boursier L."/>
            <person name="Brans A."/>
            <person name="Braun M."/>
            <person name="Brignell S.C."/>
            <person name="Bron S."/>
            <person name="Brouillet S."/>
            <person name="Bruschi C.V."/>
            <person name="Caldwell B."/>
            <person name="Capuano V."/>
            <person name="Carter N.M."/>
            <person name="Choi S.-K."/>
            <person name="Codani J.-J."/>
            <person name="Connerton I.F."/>
            <person name="Cummings N.J."/>
            <person name="Daniel R.A."/>
            <person name="Denizot F."/>
            <person name="Devine K.M."/>
            <person name="Duesterhoeft A."/>
            <person name="Ehrlich S.D."/>
            <person name="Emmerson P.T."/>
            <person name="Entian K.-D."/>
            <person name="Errington J."/>
            <person name="Fabret C."/>
            <person name="Ferrari E."/>
            <person name="Foulger D."/>
            <person name="Fritz C."/>
            <person name="Fujita M."/>
            <person name="Fujita Y."/>
            <person name="Fuma S."/>
            <person name="Galizzi A."/>
            <person name="Galleron N."/>
            <person name="Ghim S.-Y."/>
            <person name="Glaser P."/>
            <person name="Goffeau A."/>
            <person name="Golightly E.J."/>
            <person name="Grandi G."/>
            <person name="Guiseppi G."/>
            <person name="Guy B.J."/>
            <person name="Haga K."/>
            <person name="Haiech J."/>
            <person name="Harwood C.R."/>
            <person name="Henaut A."/>
            <person name="Hilbert H."/>
            <person name="Holsappel S."/>
            <person name="Hosono S."/>
            <person name="Hullo M.-F."/>
            <person name="Itaya M."/>
            <person name="Jones L.-M."/>
            <person name="Joris B."/>
            <person name="Karamata D."/>
            <person name="Kasahara Y."/>
            <person name="Klaerr-Blanchard M."/>
            <person name="Klein C."/>
            <person name="Kobayashi Y."/>
            <person name="Koetter P."/>
            <person name="Koningstein G."/>
            <person name="Krogh S."/>
            <person name="Kumano M."/>
            <person name="Kurita K."/>
            <person name="Lapidus A."/>
            <person name="Lardinois S."/>
            <person name="Lauber J."/>
            <person name="Lazarevic V."/>
            <person name="Lee S.-M."/>
            <person name="Levine A."/>
            <person name="Liu H."/>
            <person name="Masuda S."/>
            <person name="Mauel C."/>
            <person name="Medigue C."/>
            <person name="Medina N."/>
            <person name="Mellado R.P."/>
            <person name="Mizuno M."/>
            <person name="Moestl D."/>
            <person name="Nakai S."/>
            <person name="Noback M."/>
            <person name="Noone D."/>
            <person name="O'Reilly M."/>
            <person name="Ogawa K."/>
            <person name="Ogiwara A."/>
            <person name="Oudega B."/>
            <person name="Park S.-H."/>
            <person name="Parro V."/>
            <person name="Pohl T.M."/>
            <person name="Portetelle D."/>
            <person name="Porwollik S."/>
            <person name="Prescott A.M."/>
            <person name="Presecan E."/>
            <person name="Pujic P."/>
            <person name="Purnelle B."/>
            <person name="Rapoport G."/>
            <person name="Rey M."/>
            <person name="Reynolds S."/>
            <person name="Rieger M."/>
            <person name="Rivolta C."/>
            <person name="Rocha E."/>
            <person name="Roche B."/>
            <person name="Rose M."/>
            <person name="Sadaie Y."/>
            <person name="Sato T."/>
            <person name="Scanlan E."/>
            <person name="Schleich S."/>
            <person name="Schroeter R."/>
            <person name="Scoffone F."/>
            <person name="Sekiguchi J."/>
            <person name="Sekowska A."/>
            <person name="Seror S.J."/>
            <person name="Serror P."/>
            <person name="Shin B.-S."/>
            <person name="Soldo B."/>
            <person name="Sorokin A."/>
            <person name="Tacconi E."/>
            <person name="Takagi T."/>
            <person name="Takahashi H."/>
            <person name="Takemaru K."/>
            <person name="Takeuchi M."/>
            <person name="Tamakoshi A."/>
            <person name="Tanaka T."/>
            <person name="Terpstra P."/>
            <person name="Tognoni A."/>
            <person name="Tosato V."/>
            <person name="Uchiyama S."/>
            <person name="Vandenbol M."/>
            <person name="Vannier F."/>
            <person name="Vassarotti A."/>
            <person name="Viari A."/>
            <person name="Wambutt R."/>
            <person name="Wedler E."/>
            <person name="Wedler H."/>
            <person name="Weitzenegger T."/>
            <person name="Winters P."/>
            <person name="Wipat A."/>
            <person name="Yamamoto H."/>
            <person name="Yamane K."/>
            <person name="Yasumoto K."/>
            <person name="Yata K."/>
            <person name="Yoshida K."/>
            <person name="Yoshikawa H.-F."/>
            <person name="Zumstein E."/>
            <person name="Yoshikawa H."/>
            <person name="Danchin A."/>
        </authorList>
    </citation>
    <scope>NUCLEOTIDE SEQUENCE [LARGE SCALE GENOMIC DNA]</scope>
    <source>
        <strain>168</strain>
    </source>
</reference>
<reference key="3">
    <citation type="journal article" date="1999" name="Biochim. Biophys. Acta">
        <title>Analyses of a Bacillus subtilis homologue of the Na+/H+ antiporter gene which is important for pH homeostasis of alkaliphilic Bacillus sp. C-125.</title>
        <authorList>
            <person name="Kosono S."/>
            <person name="Morotomi S."/>
            <person name="Kitada M."/>
            <person name="Kudo T."/>
        </authorList>
    </citation>
    <scope>FUNCTION</scope>
    <source>
        <strain>168</strain>
    </source>
</reference>
<reference key="4">
    <citation type="journal article" date="1999" name="J. Bacteriol.">
        <title>mrp, a multigene, multifunctional locus in Bacillus subtilis with roles in resistance to cholate and to Na+ and in pH homeostasis.</title>
        <authorList>
            <person name="Ito M."/>
            <person name="Guffanti A.A."/>
            <person name="Oudega B."/>
            <person name="Krulwich T.A."/>
        </authorList>
    </citation>
    <scope>FUNCTION</scope>
</reference>
<reference key="5">
    <citation type="journal article" date="2000" name="J. Bacteriol.">
        <title>Function of a principal Na(+)/H(+) antiporter, ShaA, is required for initiation of sporulation in Bacillus subtilis.</title>
        <authorList>
            <person name="Kosono S."/>
            <person name="Ohashi Y."/>
            <person name="Kawamura F."/>
            <person name="Kitada M."/>
            <person name="Kudo T."/>
        </authorList>
    </citation>
    <scope>FUNCTION</scope>
    <source>
        <strain>168</strain>
    </source>
</reference>
<reference key="6">
    <citation type="journal article" date="2001" name="FEBS Lett.">
        <title>Mrp-dependent Na(+)/H(+) antiporters of Bacillus exhibit characteristics that are unanticipated for completely secondary active transporters.</title>
        <authorList>
            <person name="Ito M."/>
            <person name="Guffanti A.A."/>
            <person name="Krulwich T.A."/>
        </authorList>
    </citation>
    <scope>COUPLING ENERGIZATION MODE</scope>
</reference>
<reference key="7">
    <citation type="journal article" date="2007" name="J. Bacteriol.">
        <title>Catalytic properties of Staphylococcus aureus and Bacillus members of the secondary cation/proton antiporter-3 (Mrp) family are revealed by an optimized assay in an Escherichia coli host.</title>
        <authorList>
            <person name="Swartz T.H."/>
            <person name="Ito M."/>
            <person name="Ohira T."/>
            <person name="Natsui S."/>
            <person name="Hicks D.B."/>
            <person name="Krulwich T.A."/>
        </authorList>
    </citation>
    <scope>FUNCTION IN ANTIPORT OF LITHIUM</scope>
</reference>
<reference key="8">
    <citation type="journal article" date="2007" name="J. Bacteriol.">
        <title>Complex formation by the mrpABCDEFG gene products, which constitute a principal Na+/H+ antiporter in Bacillus subtilis.</title>
        <authorList>
            <person name="Kajiyama Y."/>
            <person name="Otagiri M."/>
            <person name="Sekiguchi J."/>
            <person name="Kosono S."/>
            <person name="Kudo T."/>
        </authorList>
    </citation>
    <scope>SUBUNIT</scope>
    <scope>SUBCELLULAR LOCATION</scope>
    <source>
        <strain>168 / Marburg / UOT1285</strain>
    </source>
</reference>
<gene>
    <name type="primary">mrpA</name>
    <name type="synonym">ntrA</name>
    <name type="synonym">shaA</name>
    <name type="synonym">yufT</name>
    <name type="ordered locus">BSU31600</name>
</gene>
<comment type="function">
    <text evidence="2 3 4 6">Mrp complex is a Na(+)/H(+) antiporter that is considered to be the major Na(+) excretion system in B.subtilis. Has a major role in Na(+) resistance and a minor role in Na(+)- and K(+)-dependent pH homeostasis as compared to TetB. MrpA may be the actual Na(+)/H(+) antiporter, although the six other Mrp proteins are all required for Na(+)/H(+) antiport activity and Na(+) resistance. MrpA is required for initiation of sporulation when external Na(+) concentration increases. Also transports Li(+) but not K(+), Ca(2+) or Mg(2+).</text>
</comment>
<comment type="subunit">
    <text evidence="5">Forms a heterooligomeric complex that consists of seven subunits: MrpA, MrpB, MrpC, MrpD, MrpE, MrpF and MrpG.</text>
</comment>
<comment type="subcellular location">
    <subcellularLocation>
        <location evidence="5">Cell membrane</location>
        <topology evidence="5">Multi-pass membrane protein</topology>
    </subcellularLocation>
</comment>
<comment type="miscellaneous">
    <text>Mrp-dependent antiport apparently occurs by a secondary, proton motive force-dependent mechanism, but the similarity of several Mrp proteins to membrane-embedded subunits of energy-coupled NADH dehydrogenase complexes raises the possibility that there is a capacity for electron transport that could provide a primary energy coupling option for Mrp functions.</text>
</comment>
<comment type="similarity">
    <text evidence="7">Belongs to the CPA3 antiporters (TC 2.A.63) subunit A family.</text>
</comment>
<comment type="sequence caution" evidence="7">
    <conflict type="erroneous initiation">
        <sequence resource="EMBL-CDS" id="CAB07942"/>
    </conflict>
    <text>Truncated N-terminus.</text>
</comment>
<sequence length="801" mass="89531">MQLLHLAILSPFLFAFIIPFLAKYAKRVHTGWFVLILPVLLFIYFLPMIRMTQSGETLRSVLEWIPSLGINFTVYIDGLGLLFALLITGIGSLVTLYSIFYLSKEKEQLGPFYVYLLMFMGAMLGVVLVDNVMVLYMFWELTSLSSFLLIGYWYKREKSRYGAAKSLLITVSGGLCMLGGFILLYLITDSFSIREMVHQVQLIAGHELFIPAMILILLGAFTKSAQFPFYIWLPDAMEAPTPVSAYLHSATMVKAGIYVIARFSPIFAFSAQWFWIVSLVGLFTMVWGSFHAVKQTDLKSILAFSTVSQLGMIISMLGVSAAALHYGHTEYYTVAAMAAIFHLINHATFKGSLFMAVGIIDHETGTRDIRKLGGLMAIMPITFTISLIGTFSMAGLPPFNGFLSKEMFFTSMLRVTHFDLFNVQTWGVLFPLFAWIGSVFTFIYSMKLLFKTFRGNYQPEQLEKQAHEAPVGMLVPPVILVALAVSLFFFPNILSYSLIEPAMNSIYPTLLDGHEKFHVHISQWHGVTTELLMTAGIVVIGTIGYLSLNKWKGIYKLFPSKLTLNRLYDKLLTMMEKGSYRVTKQYMTGFLRDYLLYIFAGFIILIGGAFAIKGGFSFKTEGMAKIGVYEIILTLVMISATVATVFARSRLTAIIALGVVGYTLALFFVIFRAPDLALTQLVIETISVALFLLCFYHLPKLRLKTKTRTFRMTNFIISLGVGVIVTLLGIASSSQRTKDSIASFFVKHSHDLGGGDNVVNVILVDFRGFDTMFEITVLTIAALGIYSMIKTKVKEEGKSGE</sequence>
<keyword id="KW-0050">Antiport</keyword>
<keyword id="KW-1003">Cell membrane</keyword>
<keyword id="KW-0375">Hydrogen ion transport</keyword>
<keyword id="KW-0406">Ion transport</keyword>
<keyword id="KW-0472">Membrane</keyword>
<keyword id="KW-1185">Reference proteome</keyword>
<keyword id="KW-0915">Sodium</keyword>
<keyword id="KW-0739">Sodium transport</keyword>
<keyword id="KW-0749">Sporulation</keyword>
<keyword id="KW-0812">Transmembrane</keyword>
<keyword id="KW-1133">Transmembrane helix</keyword>
<keyword id="KW-0813">Transport</keyword>
<feature type="chain" id="PRO_0000217074" description="Na(+)/H(+) antiporter subunit A">
    <location>
        <begin position="1"/>
        <end position="801"/>
    </location>
</feature>
<feature type="transmembrane region" description="Helical" evidence="1">
    <location>
        <begin position="4"/>
        <end position="21"/>
    </location>
</feature>
<feature type="transmembrane region" description="Helical" evidence="1">
    <location>
        <begin position="28"/>
        <end position="50"/>
    </location>
</feature>
<feature type="transmembrane region" description="Helical" evidence="1">
    <location>
        <begin position="80"/>
        <end position="102"/>
    </location>
</feature>
<feature type="transmembrane region" description="Helical" evidence="1">
    <location>
        <begin position="109"/>
        <end position="128"/>
    </location>
</feature>
<feature type="transmembrane region" description="Helical" evidence="1">
    <location>
        <begin position="132"/>
        <end position="154"/>
    </location>
</feature>
<feature type="transmembrane region" description="Helical" evidence="1">
    <location>
        <begin position="166"/>
        <end position="188"/>
    </location>
</feature>
<feature type="transmembrane region" description="Helical" evidence="1">
    <location>
        <begin position="203"/>
        <end position="222"/>
    </location>
</feature>
<feature type="transmembrane region" description="Helical" evidence="1">
    <location>
        <begin position="229"/>
        <end position="251"/>
    </location>
</feature>
<feature type="transmembrane region" description="Helical" evidence="1">
    <location>
        <begin position="266"/>
        <end position="288"/>
    </location>
</feature>
<feature type="transmembrane region" description="Helical" evidence="1">
    <location>
        <begin position="301"/>
        <end position="323"/>
    </location>
</feature>
<feature type="transmembrane region" description="Helical" evidence="1">
    <location>
        <begin position="338"/>
        <end position="360"/>
    </location>
</feature>
<feature type="transmembrane region" description="Helical" evidence="1">
    <location>
        <begin position="372"/>
        <end position="394"/>
    </location>
</feature>
<feature type="transmembrane region" description="Helical" evidence="1">
    <location>
        <begin position="428"/>
        <end position="450"/>
    </location>
</feature>
<feature type="transmembrane region" description="Helical" evidence="1">
    <location>
        <begin position="471"/>
        <end position="493"/>
    </location>
</feature>
<feature type="transmembrane region" description="Helical" evidence="1">
    <location>
        <begin position="526"/>
        <end position="548"/>
    </location>
</feature>
<feature type="transmembrane region" description="Helical" evidence="1">
    <location>
        <begin position="594"/>
        <end position="616"/>
    </location>
</feature>
<feature type="transmembrane region" description="Helical" evidence="1">
    <location>
        <begin position="626"/>
        <end position="647"/>
    </location>
</feature>
<feature type="transmembrane region" description="Helical" evidence="1">
    <location>
        <begin position="654"/>
        <end position="671"/>
    </location>
</feature>
<feature type="transmembrane region" description="Helical" evidence="1">
    <location>
        <begin position="676"/>
        <end position="698"/>
    </location>
</feature>
<feature type="transmembrane region" description="Helical" evidence="1">
    <location>
        <begin position="710"/>
        <end position="732"/>
    </location>
</feature>
<feature type="transmembrane region" description="Helical" evidence="1">
    <location>
        <begin position="772"/>
        <end position="789"/>
    </location>
</feature>
<accession>Q9K2S2</accession>
<proteinExistence type="evidence at protein level"/>
<protein>
    <recommendedName>
        <fullName>Na(+)/H(+) antiporter subunit A</fullName>
    </recommendedName>
    <alternativeName>
        <fullName>Mrp complex subunit A</fullName>
    </alternativeName>
    <alternativeName>
        <fullName>Multiple resistance and pH homeostasis protein A</fullName>
    </alternativeName>
</protein>
<organism>
    <name type="scientific">Bacillus subtilis (strain 168)</name>
    <dbReference type="NCBI Taxonomy" id="224308"/>
    <lineage>
        <taxon>Bacteria</taxon>
        <taxon>Bacillati</taxon>
        <taxon>Bacillota</taxon>
        <taxon>Bacilli</taxon>
        <taxon>Bacillales</taxon>
        <taxon>Bacillaceae</taxon>
        <taxon>Bacillus</taxon>
    </lineage>
</organism>